<keyword id="KW-0030">Aminoacyl-tRNA synthetase</keyword>
<keyword id="KW-0067">ATP-binding</keyword>
<keyword id="KW-0963">Cytoplasm</keyword>
<keyword id="KW-0436">Ligase</keyword>
<keyword id="KW-0547">Nucleotide-binding</keyword>
<keyword id="KW-0648">Protein biosynthesis</keyword>
<keyword id="KW-1185">Reference proteome</keyword>
<proteinExistence type="inferred from homology"/>
<evidence type="ECO:0000255" key="1">
    <source>
        <dbReference type="HAMAP-Rule" id="MF_02076"/>
    </source>
</evidence>
<sequence length="588" mass="66452">MENAVRDLALKHALINAVKFNGKADVKAVVSKIFADNPELRGNAKQVVEVVKEVVNYVNSLTLDEQRRILEEKWPEALGARRTVEEKRGDIESLPELPDADKLSKLTFRFAPNPDFYLHLGSARPAIVNYAYKLKYANKGKDSRFILRFEDTDPRIKRPLLDAYDAIREDLRWLGVKWDEEYIQSDRMSIYYEYARKLIENGGAYVVAKGSGCEPDDWKRLKIEGKPCLTREAESSRNLELFDKMLEGAFNEGEAIVAVKTDLSSPDPSIRDWVAFRVIDAHKYPHPRVGDKYIVWPTYNFAVAIDDHLMGITHVLRAQEHRVNTVKQYYVFKAFGWEQPYTIHFGRLKIEGLKLSKSILKKLNLTKDDVTLPTLAGLRNRGITPEAIWSLILFVGIKETDATISLKNLYAYNRRVIEPLANRYMFVKNPVKLRLRGVGDLIEAKIPMHPSYPERGIRVIKITGEGGYANVYVQASDVKPGLVVRLMGLGNVKVINVSGNEAEADFIGQSVEDARRSEAPIVQWAPPDAVNAEVIIPVNVGQVTVDNGLAEPAVAKLEQGTVMQFIRYGFVKLMGSSNGKLRLVYIHD</sequence>
<accession>A8M9D7</accession>
<gene>
    <name evidence="1" type="primary">gltX</name>
    <name type="ordered locus">Cmaq_1533</name>
</gene>
<comment type="function">
    <text evidence="1">Catalyzes the attachment of glutamate to tRNA(Glu) in a two-step reaction: glutamate is first activated by ATP to form Glu-AMP and then transferred to the acceptor end of tRNA(Glu).</text>
</comment>
<comment type="catalytic activity">
    <reaction evidence="1">
        <text>tRNA(Glu) + L-glutamate + ATP = L-glutamyl-tRNA(Glu) + AMP + diphosphate</text>
        <dbReference type="Rhea" id="RHEA:23540"/>
        <dbReference type="Rhea" id="RHEA-COMP:9663"/>
        <dbReference type="Rhea" id="RHEA-COMP:9680"/>
        <dbReference type="ChEBI" id="CHEBI:29985"/>
        <dbReference type="ChEBI" id="CHEBI:30616"/>
        <dbReference type="ChEBI" id="CHEBI:33019"/>
        <dbReference type="ChEBI" id="CHEBI:78442"/>
        <dbReference type="ChEBI" id="CHEBI:78520"/>
        <dbReference type="ChEBI" id="CHEBI:456215"/>
        <dbReference type="EC" id="6.1.1.17"/>
    </reaction>
</comment>
<comment type="subcellular location">
    <subcellularLocation>
        <location evidence="1">Cytoplasm</location>
    </subcellularLocation>
</comment>
<comment type="similarity">
    <text evidence="1">Belongs to the class-I aminoacyl-tRNA synthetase family. Glutamate--tRNA ligase type 2 subfamily.</text>
</comment>
<organism>
    <name type="scientific">Caldivirga maquilingensis (strain ATCC 700844 / DSM 13496 / JCM 10307 / IC-167)</name>
    <dbReference type="NCBI Taxonomy" id="397948"/>
    <lineage>
        <taxon>Archaea</taxon>
        <taxon>Thermoproteota</taxon>
        <taxon>Thermoprotei</taxon>
        <taxon>Thermoproteales</taxon>
        <taxon>Thermoproteaceae</taxon>
        <taxon>Caldivirga</taxon>
    </lineage>
</organism>
<reference key="1">
    <citation type="submission" date="2007-10" db="EMBL/GenBank/DDBJ databases">
        <title>Complete sequence of Caldivirga maquilingensis IC-167.</title>
        <authorList>
            <consortium name="US DOE Joint Genome Institute"/>
            <person name="Copeland A."/>
            <person name="Lucas S."/>
            <person name="Lapidus A."/>
            <person name="Barry K."/>
            <person name="Glavina del Rio T."/>
            <person name="Dalin E."/>
            <person name="Tice H."/>
            <person name="Pitluck S."/>
            <person name="Saunders E."/>
            <person name="Brettin T."/>
            <person name="Bruce D."/>
            <person name="Detter J.C."/>
            <person name="Han C."/>
            <person name="Schmutz J."/>
            <person name="Larimer F."/>
            <person name="Land M."/>
            <person name="Hauser L."/>
            <person name="Kyrpides N."/>
            <person name="Ivanova N."/>
            <person name="Biddle J.F."/>
            <person name="Zhang Z."/>
            <person name="Fitz-Gibbon S.T."/>
            <person name="Lowe T.M."/>
            <person name="Saltikov C."/>
            <person name="House C.H."/>
            <person name="Richardson P."/>
        </authorList>
    </citation>
    <scope>NUCLEOTIDE SEQUENCE [LARGE SCALE GENOMIC DNA]</scope>
    <source>
        <strain>ATCC 700844 / DSM 13496 / JCM 10307 / IC-167</strain>
    </source>
</reference>
<name>SYE_CALMQ</name>
<protein>
    <recommendedName>
        <fullName evidence="1">Glutamate--tRNA ligase</fullName>
        <ecNumber evidence="1">6.1.1.17</ecNumber>
    </recommendedName>
    <alternativeName>
        <fullName evidence="1">Glutamyl-tRNA synthetase</fullName>
        <shortName evidence="1">GluRS</shortName>
    </alternativeName>
</protein>
<dbReference type="EC" id="6.1.1.17" evidence="1"/>
<dbReference type="EMBL" id="CP000852">
    <property type="protein sequence ID" value="ABW02356.1"/>
    <property type="molecule type" value="Genomic_DNA"/>
</dbReference>
<dbReference type="RefSeq" id="WP_012186575.1">
    <property type="nucleotide sequence ID" value="NC_009954.1"/>
</dbReference>
<dbReference type="SMR" id="A8M9D7"/>
<dbReference type="STRING" id="397948.Cmaq_1533"/>
<dbReference type="GeneID" id="5709095"/>
<dbReference type="KEGG" id="cma:Cmaq_1533"/>
<dbReference type="eggNOG" id="arCOG04302">
    <property type="taxonomic scope" value="Archaea"/>
</dbReference>
<dbReference type="HOGENOM" id="CLU_001882_1_3_2"/>
<dbReference type="OrthoDB" id="10470at2157"/>
<dbReference type="Proteomes" id="UP000001137">
    <property type="component" value="Chromosome"/>
</dbReference>
<dbReference type="GO" id="GO:0005829">
    <property type="term" value="C:cytosol"/>
    <property type="evidence" value="ECO:0007669"/>
    <property type="project" value="TreeGrafter"/>
</dbReference>
<dbReference type="GO" id="GO:0005524">
    <property type="term" value="F:ATP binding"/>
    <property type="evidence" value="ECO:0007669"/>
    <property type="project" value="UniProtKB-UniRule"/>
</dbReference>
<dbReference type="GO" id="GO:0004818">
    <property type="term" value="F:glutamate-tRNA ligase activity"/>
    <property type="evidence" value="ECO:0007669"/>
    <property type="project" value="UniProtKB-UniRule"/>
</dbReference>
<dbReference type="GO" id="GO:0043604">
    <property type="term" value="P:amide biosynthetic process"/>
    <property type="evidence" value="ECO:0007669"/>
    <property type="project" value="TreeGrafter"/>
</dbReference>
<dbReference type="GO" id="GO:0006424">
    <property type="term" value="P:glutamyl-tRNA aminoacylation"/>
    <property type="evidence" value="ECO:0007669"/>
    <property type="project" value="UniProtKB-UniRule"/>
</dbReference>
<dbReference type="Gene3D" id="2.40.240.100">
    <property type="match status" value="1"/>
</dbReference>
<dbReference type="Gene3D" id="3.40.50.620">
    <property type="entry name" value="HUPs"/>
    <property type="match status" value="1"/>
</dbReference>
<dbReference type="Gene3D" id="2.40.240.10">
    <property type="entry name" value="Ribosomal Protein L25, Chain P"/>
    <property type="match status" value="1"/>
</dbReference>
<dbReference type="HAMAP" id="MF_02076">
    <property type="entry name" value="Glu_tRNA_synth_type2"/>
    <property type="match status" value="1"/>
</dbReference>
<dbReference type="InterPro" id="IPR050132">
    <property type="entry name" value="Gln/Glu-tRNA_Ligase"/>
</dbReference>
<dbReference type="InterPro" id="IPR004526">
    <property type="entry name" value="Glu-tRNA-synth_arc/euk"/>
</dbReference>
<dbReference type="InterPro" id="IPR000924">
    <property type="entry name" value="Glu/Gln-tRNA-synth"/>
</dbReference>
<dbReference type="InterPro" id="IPR020058">
    <property type="entry name" value="Glu/Gln-tRNA-synth_Ib_cat-dom"/>
</dbReference>
<dbReference type="InterPro" id="IPR020059">
    <property type="entry name" value="Glu/Gln-tRNA-synth_Ib_codon-bd"/>
</dbReference>
<dbReference type="InterPro" id="IPR020056">
    <property type="entry name" value="Rbsml_bL25/Gln-tRNA_synth_N"/>
</dbReference>
<dbReference type="InterPro" id="IPR011035">
    <property type="entry name" value="Ribosomal_bL25/Gln-tRNA_synth"/>
</dbReference>
<dbReference type="InterPro" id="IPR014729">
    <property type="entry name" value="Rossmann-like_a/b/a_fold"/>
</dbReference>
<dbReference type="InterPro" id="IPR049437">
    <property type="entry name" value="tRNA-synt_1c_C2"/>
</dbReference>
<dbReference type="NCBIfam" id="TIGR00463">
    <property type="entry name" value="gltX_arch"/>
    <property type="match status" value="1"/>
</dbReference>
<dbReference type="NCBIfam" id="NF003169">
    <property type="entry name" value="PRK04156.1"/>
    <property type="match status" value="1"/>
</dbReference>
<dbReference type="PANTHER" id="PTHR43097:SF5">
    <property type="entry name" value="GLUTAMATE--TRNA LIGASE"/>
    <property type="match status" value="1"/>
</dbReference>
<dbReference type="PANTHER" id="PTHR43097">
    <property type="entry name" value="GLUTAMINE-TRNA LIGASE"/>
    <property type="match status" value="1"/>
</dbReference>
<dbReference type="Pfam" id="PF00749">
    <property type="entry name" value="tRNA-synt_1c"/>
    <property type="match status" value="1"/>
</dbReference>
<dbReference type="Pfam" id="PF03950">
    <property type="entry name" value="tRNA-synt_1c_C"/>
    <property type="match status" value="1"/>
</dbReference>
<dbReference type="Pfam" id="PF20974">
    <property type="entry name" value="tRNA-synt_1c_C2"/>
    <property type="match status" value="1"/>
</dbReference>
<dbReference type="PRINTS" id="PR00987">
    <property type="entry name" value="TRNASYNTHGLU"/>
</dbReference>
<dbReference type="SUPFAM" id="SSF52374">
    <property type="entry name" value="Nucleotidylyl transferase"/>
    <property type="match status" value="1"/>
</dbReference>
<dbReference type="SUPFAM" id="SSF50715">
    <property type="entry name" value="Ribosomal protein L25-like"/>
    <property type="match status" value="1"/>
</dbReference>
<feature type="chain" id="PRO_0000367798" description="Glutamate--tRNA ligase">
    <location>
        <begin position="1"/>
        <end position="588"/>
    </location>
</feature>
<feature type="short sequence motif" description="'HIGH' region" evidence="1">
    <location>
        <begin position="112"/>
        <end position="122"/>
    </location>
</feature>